<geneLocation type="chloroplast"/>
<organism>
    <name type="scientific">Cyanidium caldarium</name>
    <name type="common">Red alga</name>
    <dbReference type="NCBI Taxonomy" id="2771"/>
    <lineage>
        <taxon>Eukaryota</taxon>
        <taxon>Rhodophyta</taxon>
        <taxon>Bangiophyceae</taxon>
        <taxon>Cyanidiales</taxon>
        <taxon>Cyanidiaceae</taxon>
        <taxon>Cyanidium</taxon>
    </lineage>
</organism>
<dbReference type="EC" id="3.4.24.-" evidence="1"/>
<dbReference type="EMBL" id="AF022186">
    <property type="protein sequence ID" value="AAB82667.1"/>
    <property type="molecule type" value="Genomic_DNA"/>
</dbReference>
<dbReference type="PIR" id="T11990">
    <property type="entry name" value="T11990"/>
</dbReference>
<dbReference type="RefSeq" id="NP_045094.1">
    <property type="nucleotide sequence ID" value="NC_001840.1"/>
</dbReference>
<dbReference type="SMR" id="O19922"/>
<dbReference type="MEROPS" id="M41.017"/>
<dbReference type="GeneID" id="800206"/>
<dbReference type="GO" id="GO:0009535">
    <property type="term" value="C:chloroplast thylakoid membrane"/>
    <property type="evidence" value="ECO:0007669"/>
    <property type="project" value="UniProtKB-SubCell"/>
</dbReference>
<dbReference type="GO" id="GO:0005524">
    <property type="term" value="F:ATP binding"/>
    <property type="evidence" value="ECO:0007669"/>
    <property type="project" value="UniProtKB-UniRule"/>
</dbReference>
<dbReference type="GO" id="GO:0016887">
    <property type="term" value="F:ATP hydrolysis activity"/>
    <property type="evidence" value="ECO:0007669"/>
    <property type="project" value="UniProtKB-UniRule"/>
</dbReference>
<dbReference type="GO" id="GO:0004176">
    <property type="term" value="F:ATP-dependent peptidase activity"/>
    <property type="evidence" value="ECO:0007669"/>
    <property type="project" value="InterPro"/>
</dbReference>
<dbReference type="GO" id="GO:0004222">
    <property type="term" value="F:metalloendopeptidase activity"/>
    <property type="evidence" value="ECO:0007669"/>
    <property type="project" value="InterPro"/>
</dbReference>
<dbReference type="GO" id="GO:0008270">
    <property type="term" value="F:zinc ion binding"/>
    <property type="evidence" value="ECO:0007669"/>
    <property type="project" value="UniProtKB-UniRule"/>
</dbReference>
<dbReference type="GO" id="GO:0030163">
    <property type="term" value="P:protein catabolic process"/>
    <property type="evidence" value="ECO:0007669"/>
    <property type="project" value="UniProtKB-UniRule"/>
</dbReference>
<dbReference type="GO" id="GO:0006508">
    <property type="term" value="P:proteolysis"/>
    <property type="evidence" value="ECO:0007669"/>
    <property type="project" value="UniProtKB-KW"/>
</dbReference>
<dbReference type="CDD" id="cd19501">
    <property type="entry name" value="RecA-like_FtsH"/>
    <property type="match status" value="1"/>
</dbReference>
<dbReference type="FunFam" id="1.10.8.60:FF:000001">
    <property type="entry name" value="ATP-dependent zinc metalloprotease FtsH"/>
    <property type="match status" value="1"/>
</dbReference>
<dbReference type="FunFam" id="1.20.58.760:FF:000001">
    <property type="entry name" value="ATP-dependent zinc metalloprotease FtsH"/>
    <property type="match status" value="1"/>
</dbReference>
<dbReference type="FunFam" id="3.40.50.300:FF:000001">
    <property type="entry name" value="ATP-dependent zinc metalloprotease FtsH"/>
    <property type="match status" value="1"/>
</dbReference>
<dbReference type="Gene3D" id="1.10.8.60">
    <property type="match status" value="1"/>
</dbReference>
<dbReference type="Gene3D" id="3.40.50.300">
    <property type="entry name" value="P-loop containing nucleotide triphosphate hydrolases"/>
    <property type="match status" value="1"/>
</dbReference>
<dbReference type="Gene3D" id="1.20.58.760">
    <property type="entry name" value="Peptidase M41"/>
    <property type="match status" value="1"/>
</dbReference>
<dbReference type="HAMAP" id="MF_01458">
    <property type="entry name" value="FtsH"/>
    <property type="match status" value="1"/>
</dbReference>
<dbReference type="InterPro" id="IPR003593">
    <property type="entry name" value="AAA+_ATPase"/>
</dbReference>
<dbReference type="InterPro" id="IPR041569">
    <property type="entry name" value="AAA_lid_3"/>
</dbReference>
<dbReference type="InterPro" id="IPR003959">
    <property type="entry name" value="ATPase_AAA_core"/>
</dbReference>
<dbReference type="InterPro" id="IPR003960">
    <property type="entry name" value="ATPase_AAA_CS"/>
</dbReference>
<dbReference type="InterPro" id="IPR005936">
    <property type="entry name" value="FtsH"/>
</dbReference>
<dbReference type="InterPro" id="IPR027417">
    <property type="entry name" value="P-loop_NTPase"/>
</dbReference>
<dbReference type="InterPro" id="IPR011546">
    <property type="entry name" value="Pept_M41_FtsH_extracell"/>
</dbReference>
<dbReference type="InterPro" id="IPR000642">
    <property type="entry name" value="Peptidase_M41"/>
</dbReference>
<dbReference type="InterPro" id="IPR037219">
    <property type="entry name" value="Peptidase_M41-like"/>
</dbReference>
<dbReference type="NCBIfam" id="TIGR01241">
    <property type="entry name" value="FtsH_fam"/>
    <property type="match status" value="1"/>
</dbReference>
<dbReference type="PANTHER" id="PTHR23076:SF139">
    <property type="entry name" value="ATP-DEPENDENT ZINC METALLOPROTEASE FTSH 2, CHLOROPLASTIC"/>
    <property type="match status" value="1"/>
</dbReference>
<dbReference type="PANTHER" id="PTHR23076">
    <property type="entry name" value="METALLOPROTEASE M41 FTSH"/>
    <property type="match status" value="1"/>
</dbReference>
<dbReference type="Pfam" id="PF00004">
    <property type="entry name" value="AAA"/>
    <property type="match status" value="1"/>
</dbReference>
<dbReference type="Pfam" id="PF17862">
    <property type="entry name" value="AAA_lid_3"/>
    <property type="match status" value="1"/>
</dbReference>
<dbReference type="Pfam" id="PF06480">
    <property type="entry name" value="FtsH_ext"/>
    <property type="match status" value="1"/>
</dbReference>
<dbReference type="Pfam" id="PF01434">
    <property type="entry name" value="Peptidase_M41"/>
    <property type="match status" value="1"/>
</dbReference>
<dbReference type="SMART" id="SM00382">
    <property type="entry name" value="AAA"/>
    <property type="match status" value="1"/>
</dbReference>
<dbReference type="SUPFAM" id="SSF140990">
    <property type="entry name" value="FtsH protease domain-like"/>
    <property type="match status" value="1"/>
</dbReference>
<dbReference type="SUPFAM" id="SSF52540">
    <property type="entry name" value="P-loop containing nucleoside triphosphate hydrolases"/>
    <property type="match status" value="1"/>
</dbReference>
<dbReference type="PROSITE" id="PS00674">
    <property type="entry name" value="AAA"/>
    <property type="match status" value="1"/>
</dbReference>
<evidence type="ECO:0000255" key="1">
    <source>
        <dbReference type="HAMAP-Rule" id="MF_01458"/>
    </source>
</evidence>
<feature type="chain" id="PRO_0000084657" description="ATP-dependent zinc metalloprotease FtsH">
    <location>
        <begin position="1"/>
        <end position="614"/>
    </location>
</feature>
<feature type="topological domain" description="Stromal" evidence="1">
    <location>
        <begin position="1"/>
        <end position="7"/>
    </location>
</feature>
<feature type="transmembrane region" description="Helical" evidence="1">
    <location>
        <begin position="8"/>
        <end position="28"/>
    </location>
</feature>
<feature type="topological domain" description="Lumenal" evidence="1">
    <location>
        <begin position="29"/>
        <end position="116"/>
    </location>
</feature>
<feature type="transmembrane region" description="Helical" evidence="1">
    <location>
        <begin position="117"/>
        <end position="137"/>
    </location>
</feature>
<feature type="topological domain" description="Stromal" evidence="1">
    <location>
        <begin position="138"/>
        <end position="614"/>
    </location>
</feature>
<feature type="active site" evidence="1">
    <location>
        <position position="433"/>
    </location>
</feature>
<feature type="binding site" evidence="1">
    <location>
        <begin position="211"/>
        <end position="218"/>
    </location>
    <ligand>
        <name>ATP</name>
        <dbReference type="ChEBI" id="CHEBI:30616"/>
    </ligand>
</feature>
<feature type="binding site" evidence="1">
    <location>
        <position position="432"/>
    </location>
    <ligand>
        <name>Zn(2+)</name>
        <dbReference type="ChEBI" id="CHEBI:29105"/>
        <note>catalytic</note>
    </ligand>
</feature>
<feature type="binding site" evidence="1">
    <location>
        <position position="436"/>
    </location>
    <ligand>
        <name>Zn(2+)</name>
        <dbReference type="ChEBI" id="CHEBI:29105"/>
        <note>catalytic</note>
    </ligand>
</feature>
<feature type="binding site" evidence="1">
    <location>
        <position position="510"/>
    </location>
    <ligand>
        <name>Zn(2+)</name>
        <dbReference type="ChEBI" id="CHEBI:29105"/>
        <note>catalytic</note>
    </ligand>
</feature>
<proteinExistence type="inferred from homology"/>
<sequence length="614" mass="68245">MKKQWKKIVLFVLPVIITLITLSSFLFYNQDVVHNWSSSRMTYGRFLEYIDMNWVKKVDLYDNARTAIVDIINPDIKGEEQLVRVELPTFSSELVSKLKNKLIDFDAHPSSSNVNLVSWLSNLLLPLILIITLFFFFRRGNKSSSGPGQAFNFGKAKARFHMEAKTGIVFEDVAGIEEAKEELQEIVAFLKDSRKFTNVGATIPKGVLLVGPPGTGKTLLAKAIAGEASAPFFSISGSEFVEMFVGVGASRVRDLFKKAKEKAPCIVFIDEIDAVGRQRGVGIGGGNDEREQTLNQLLTEMDGFSGDTGVIVVAATNRIDVLDSALLRPGRFDRQIMVSLPNINGRLAILKVHSKKKKIHKDVLLEVIARRTPGFSGADLANLLNEAAILTVRRGKVEITMKEIEDSIDKIIAGLEGSPLADSRIKRLIAYHEAGHAVAATFLPHHDPVQKVTLIPRRQAKGLTWFLPNDDQFLVSKSQILSKIIAALAGRAMEEIVFGLPEVTIGAANDIKQVTFMARQMVTKFGMSKVGPICLENSSSEVFIGRDLMGRHELSEEMVAKVDLEVRSILKDCYIQARTILSQNRKLIDRVVNELVEKETIEAKEFMRIVEERV</sequence>
<keyword id="KW-0067">ATP-binding</keyword>
<keyword id="KW-0150">Chloroplast</keyword>
<keyword id="KW-0378">Hydrolase</keyword>
<keyword id="KW-0472">Membrane</keyword>
<keyword id="KW-0479">Metal-binding</keyword>
<keyword id="KW-0482">Metalloprotease</keyword>
<keyword id="KW-0547">Nucleotide-binding</keyword>
<keyword id="KW-0934">Plastid</keyword>
<keyword id="KW-0645">Protease</keyword>
<keyword id="KW-0793">Thylakoid</keyword>
<keyword id="KW-0812">Transmembrane</keyword>
<keyword id="KW-1133">Transmembrane helix</keyword>
<keyword id="KW-0862">Zinc</keyword>
<name>FTSH_CYACA</name>
<protein>
    <recommendedName>
        <fullName evidence="1">ATP-dependent zinc metalloprotease FtsH</fullName>
        <ecNumber evidence="1">3.4.24.-</ecNumber>
    </recommendedName>
</protein>
<reference key="1">
    <citation type="journal article" date="2000" name="J. Mol. Evol.">
        <title>The structure and gene repertoire of an ancient red algal plastid genome.</title>
        <authorList>
            <person name="Gloeckner G."/>
            <person name="Rosenthal A."/>
            <person name="Valentin K.-U."/>
        </authorList>
    </citation>
    <scope>NUCLEOTIDE SEQUENCE [LARGE SCALE GENOMIC DNA]</scope>
    <source>
        <strain>RK-1</strain>
    </source>
</reference>
<accession>O19922</accession>
<comment type="function">
    <text evidence="1">Acts as a processive, ATP-dependent zinc metallopeptidase.</text>
</comment>
<comment type="cofactor">
    <cofactor evidence="1">
        <name>Zn(2+)</name>
        <dbReference type="ChEBI" id="CHEBI:29105"/>
    </cofactor>
    <text evidence="1">Binds 1 zinc ion per subunit.</text>
</comment>
<comment type="subunit">
    <text evidence="1">Homohexamer.</text>
</comment>
<comment type="subcellular location">
    <subcellularLocation>
        <location evidence="1">Plastid</location>
        <location evidence="1">Chloroplast thylakoid membrane</location>
        <topology evidence="1">Multi-pass membrane protein</topology>
        <orientation evidence="1">Stromal side</orientation>
    </subcellularLocation>
</comment>
<comment type="similarity">
    <text evidence="1">In the central section; belongs to the AAA ATPase family.</text>
</comment>
<comment type="similarity">
    <text evidence="1">In the C-terminal section; belongs to the peptidase M41 family.</text>
</comment>
<gene>
    <name evidence="1" type="primary">ftsH</name>
</gene>